<reference key="1">
    <citation type="journal article" date="2000" name="Science">
        <title>The genome sequence of Drosophila melanogaster.</title>
        <authorList>
            <person name="Adams M.D."/>
            <person name="Celniker S.E."/>
            <person name="Holt R.A."/>
            <person name="Evans C.A."/>
            <person name="Gocayne J.D."/>
            <person name="Amanatides P.G."/>
            <person name="Scherer S.E."/>
            <person name="Li P.W."/>
            <person name="Hoskins R.A."/>
            <person name="Galle R.F."/>
            <person name="George R.A."/>
            <person name="Lewis S.E."/>
            <person name="Richards S."/>
            <person name="Ashburner M."/>
            <person name="Henderson S.N."/>
            <person name="Sutton G.G."/>
            <person name="Wortman J.R."/>
            <person name="Yandell M.D."/>
            <person name="Zhang Q."/>
            <person name="Chen L.X."/>
            <person name="Brandon R.C."/>
            <person name="Rogers Y.-H.C."/>
            <person name="Blazej R.G."/>
            <person name="Champe M."/>
            <person name="Pfeiffer B.D."/>
            <person name="Wan K.H."/>
            <person name="Doyle C."/>
            <person name="Baxter E.G."/>
            <person name="Helt G."/>
            <person name="Nelson C.R."/>
            <person name="Miklos G.L.G."/>
            <person name="Abril J.F."/>
            <person name="Agbayani A."/>
            <person name="An H.-J."/>
            <person name="Andrews-Pfannkoch C."/>
            <person name="Baldwin D."/>
            <person name="Ballew R.M."/>
            <person name="Basu A."/>
            <person name="Baxendale J."/>
            <person name="Bayraktaroglu L."/>
            <person name="Beasley E.M."/>
            <person name="Beeson K.Y."/>
            <person name="Benos P.V."/>
            <person name="Berman B.P."/>
            <person name="Bhandari D."/>
            <person name="Bolshakov S."/>
            <person name="Borkova D."/>
            <person name="Botchan M.R."/>
            <person name="Bouck J."/>
            <person name="Brokstein P."/>
            <person name="Brottier P."/>
            <person name="Burtis K.C."/>
            <person name="Busam D.A."/>
            <person name="Butler H."/>
            <person name="Cadieu E."/>
            <person name="Center A."/>
            <person name="Chandra I."/>
            <person name="Cherry J.M."/>
            <person name="Cawley S."/>
            <person name="Dahlke C."/>
            <person name="Davenport L.B."/>
            <person name="Davies P."/>
            <person name="de Pablos B."/>
            <person name="Delcher A."/>
            <person name="Deng Z."/>
            <person name="Mays A.D."/>
            <person name="Dew I."/>
            <person name="Dietz S.M."/>
            <person name="Dodson K."/>
            <person name="Doup L.E."/>
            <person name="Downes M."/>
            <person name="Dugan-Rocha S."/>
            <person name="Dunkov B.C."/>
            <person name="Dunn P."/>
            <person name="Durbin K.J."/>
            <person name="Evangelista C.C."/>
            <person name="Ferraz C."/>
            <person name="Ferriera S."/>
            <person name="Fleischmann W."/>
            <person name="Fosler C."/>
            <person name="Gabrielian A.E."/>
            <person name="Garg N.S."/>
            <person name="Gelbart W.M."/>
            <person name="Glasser K."/>
            <person name="Glodek A."/>
            <person name="Gong F."/>
            <person name="Gorrell J.H."/>
            <person name="Gu Z."/>
            <person name="Guan P."/>
            <person name="Harris M."/>
            <person name="Harris N.L."/>
            <person name="Harvey D.A."/>
            <person name="Heiman T.J."/>
            <person name="Hernandez J.R."/>
            <person name="Houck J."/>
            <person name="Hostin D."/>
            <person name="Houston K.A."/>
            <person name="Howland T.J."/>
            <person name="Wei M.-H."/>
            <person name="Ibegwam C."/>
            <person name="Jalali M."/>
            <person name="Kalush F."/>
            <person name="Karpen G.H."/>
            <person name="Ke Z."/>
            <person name="Kennison J.A."/>
            <person name="Ketchum K.A."/>
            <person name="Kimmel B.E."/>
            <person name="Kodira C.D."/>
            <person name="Kraft C.L."/>
            <person name="Kravitz S."/>
            <person name="Kulp D."/>
            <person name="Lai Z."/>
            <person name="Lasko P."/>
            <person name="Lei Y."/>
            <person name="Levitsky A.A."/>
            <person name="Li J.H."/>
            <person name="Li Z."/>
            <person name="Liang Y."/>
            <person name="Lin X."/>
            <person name="Liu X."/>
            <person name="Mattei B."/>
            <person name="McIntosh T.C."/>
            <person name="McLeod M.P."/>
            <person name="McPherson D."/>
            <person name="Merkulov G."/>
            <person name="Milshina N.V."/>
            <person name="Mobarry C."/>
            <person name="Morris J."/>
            <person name="Moshrefi A."/>
            <person name="Mount S.M."/>
            <person name="Moy M."/>
            <person name="Murphy B."/>
            <person name="Murphy L."/>
            <person name="Muzny D.M."/>
            <person name="Nelson D.L."/>
            <person name="Nelson D.R."/>
            <person name="Nelson K.A."/>
            <person name="Nixon K."/>
            <person name="Nusskern D.R."/>
            <person name="Pacleb J.M."/>
            <person name="Palazzolo M."/>
            <person name="Pittman G.S."/>
            <person name="Pan S."/>
            <person name="Pollard J."/>
            <person name="Puri V."/>
            <person name="Reese M.G."/>
            <person name="Reinert K."/>
            <person name="Remington K."/>
            <person name="Saunders R.D.C."/>
            <person name="Scheeler F."/>
            <person name="Shen H."/>
            <person name="Shue B.C."/>
            <person name="Siden-Kiamos I."/>
            <person name="Simpson M."/>
            <person name="Skupski M.P."/>
            <person name="Smith T.J."/>
            <person name="Spier E."/>
            <person name="Spradling A.C."/>
            <person name="Stapleton M."/>
            <person name="Strong R."/>
            <person name="Sun E."/>
            <person name="Svirskas R."/>
            <person name="Tector C."/>
            <person name="Turner R."/>
            <person name="Venter E."/>
            <person name="Wang A.H."/>
            <person name="Wang X."/>
            <person name="Wang Z.-Y."/>
            <person name="Wassarman D.A."/>
            <person name="Weinstock G.M."/>
            <person name="Weissenbach J."/>
            <person name="Williams S.M."/>
            <person name="Woodage T."/>
            <person name="Worley K.C."/>
            <person name="Wu D."/>
            <person name="Yang S."/>
            <person name="Yao Q.A."/>
            <person name="Ye J."/>
            <person name="Yeh R.-F."/>
            <person name="Zaveri J.S."/>
            <person name="Zhan M."/>
            <person name="Zhang G."/>
            <person name="Zhao Q."/>
            <person name="Zheng L."/>
            <person name="Zheng X.H."/>
            <person name="Zhong F.N."/>
            <person name="Zhong W."/>
            <person name="Zhou X."/>
            <person name="Zhu S.C."/>
            <person name="Zhu X."/>
            <person name="Smith H.O."/>
            <person name="Gibbs R.A."/>
            <person name="Myers E.W."/>
            <person name="Rubin G.M."/>
            <person name="Venter J.C."/>
        </authorList>
    </citation>
    <scope>NUCLEOTIDE SEQUENCE [LARGE SCALE GENOMIC DNA]</scope>
    <source>
        <strain>Berkeley</strain>
    </source>
</reference>
<reference key="2">
    <citation type="journal article" date="2002" name="Genome Biol.">
        <title>Annotation of the Drosophila melanogaster euchromatic genome: a systematic review.</title>
        <authorList>
            <person name="Misra S."/>
            <person name="Crosby M.A."/>
            <person name="Mungall C.J."/>
            <person name="Matthews B.B."/>
            <person name="Campbell K.S."/>
            <person name="Hradecky P."/>
            <person name="Huang Y."/>
            <person name="Kaminker J.S."/>
            <person name="Millburn G.H."/>
            <person name="Prochnik S.E."/>
            <person name="Smith C.D."/>
            <person name="Tupy J.L."/>
            <person name="Whitfield E.J."/>
            <person name="Bayraktaroglu L."/>
            <person name="Berman B.P."/>
            <person name="Bettencourt B.R."/>
            <person name="Celniker S.E."/>
            <person name="de Grey A.D.N.J."/>
            <person name="Drysdale R.A."/>
            <person name="Harris N.L."/>
            <person name="Richter J."/>
            <person name="Russo S."/>
            <person name="Schroeder A.J."/>
            <person name="Shu S.Q."/>
            <person name="Stapleton M."/>
            <person name="Yamada C."/>
            <person name="Ashburner M."/>
            <person name="Gelbart W.M."/>
            <person name="Rubin G.M."/>
            <person name="Lewis S.E."/>
        </authorList>
    </citation>
    <scope>GENOME REANNOTATION</scope>
    <source>
        <strain>Berkeley</strain>
    </source>
</reference>
<reference key="3">
    <citation type="journal article" date="2000" name="Science">
        <title>From sequence to chromosome: the tip of the X chromosome of D. melanogaster.</title>
        <authorList>
            <person name="Benos P.V."/>
            <person name="Gatt M.K."/>
            <person name="Ashburner M."/>
            <person name="Murphy L."/>
            <person name="Harris D."/>
            <person name="Barrell B.G."/>
            <person name="Ferraz C."/>
            <person name="Vidal S."/>
            <person name="Brun C."/>
            <person name="Demailles J."/>
            <person name="Cadieu E."/>
            <person name="Dreano S."/>
            <person name="Gloux S."/>
            <person name="Lelaure V."/>
            <person name="Mottier S."/>
            <person name="Galibert F."/>
            <person name="Borkova D."/>
            <person name="Minana B."/>
            <person name="Kafatos F.C."/>
            <person name="Louis C."/>
            <person name="Siden-Kiamos I."/>
            <person name="Bolshakov S."/>
            <person name="Papagiannakis G."/>
            <person name="Spanos L."/>
            <person name="Cox S."/>
            <person name="Madueno E."/>
            <person name="de Pablos B."/>
            <person name="Modolell J."/>
            <person name="Peter A."/>
            <person name="Schoettler P."/>
            <person name="Werner M."/>
            <person name="Mourkioti F."/>
            <person name="Beinert N."/>
            <person name="Dowe G."/>
            <person name="Schaefer U."/>
            <person name="Jaeckle H."/>
            <person name="Bucheton A."/>
            <person name="Callister D.M."/>
            <person name="Campbell L.A."/>
            <person name="Darlamitsou A."/>
            <person name="Henderson N.S."/>
            <person name="McMillan P.J."/>
            <person name="Salles C."/>
            <person name="Tait E.A."/>
            <person name="Valenti P."/>
            <person name="Saunders R.D.C."/>
            <person name="Glover D.M."/>
        </authorList>
    </citation>
    <scope>NUCLEOTIDE SEQUENCE [LARGE SCALE GENOMIC DNA]</scope>
    <source>
        <strain>Oregon-R</strain>
    </source>
</reference>
<reference key="4">
    <citation type="journal article" date="2002" name="Genome Biol.">
        <title>A Drosophila full-length cDNA resource.</title>
        <authorList>
            <person name="Stapleton M."/>
            <person name="Carlson J.W."/>
            <person name="Brokstein P."/>
            <person name="Yu C."/>
            <person name="Champe M."/>
            <person name="George R.A."/>
            <person name="Guarin H."/>
            <person name="Kronmiller B."/>
            <person name="Pacleb J.M."/>
            <person name="Park S."/>
            <person name="Wan K.H."/>
            <person name="Rubin G.M."/>
            <person name="Celniker S.E."/>
        </authorList>
    </citation>
    <scope>NUCLEOTIDE SEQUENCE [LARGE SCALE MRNA]</scope>
    <source>
        <strain>Berkeley</strain>
        <tissue>Head</tissue>
    </source>
</reference>
<reference key="5">
    <citation type="submission" date="2009-03" db="EMBL/GenBank/DDBJ databases">
        <authorList>
            <person name="Carlson J.W."/>
            <person name="Booth B."/>
            <person name="Frise E."/>
            <person name="Park S."/>
            <person name="Wan K.H."/>
            <person name="Yu C."/>
            <person name="Celniker S.E."/>
        </authorList>
    </citation>
    <scope>NUCLEOTIDE SEQUENCE [LARGE SCALE MRNA]</scope>
    <source>
        <strain>Berkeley</strain>
        <tissue>Embryo</tissue>
    </source>
</reference>
<reference key="6">
    <citation type="journal article" date="2001" name="Mol. Cell. Biol.">
        <title>Drosophila Mediator complex is broadly utilized by diverse gene-specific transcription factors at different types of core promoters.</title>
        <authorList>
            <person name="Park J.M."/>
            <person name="Gim B.S."/>
            <person name="Kim J.M."/>
            <person name="Yoon J.H."/>
            <person name="Kim H.-S."/>
            <person name="Kang J.-G."/>
            <person name="Kim Y.-J."/>
        </authorList>
    </citation>
    <scope>FUNCTION OF THE MEDIATOR COMPLEX</scope>
    <scope>IDENTIFICATION IN A COMPLEX WITH CDK8; MED4; MED6; MED14; MED17; MED20; MED21 AND MED31</scope>
    <scope>DEVELOPMENTAL STAGE</scope>
</reference>
<reference key="7">
    <citation type="journal article" date="2002" name="J. Biol. Chem.">
        <title>Novel Mediator proteins of the small Mediator complex in Drosophila SL2 cells.</title>
        <authorList>
            <person name="Gu J.-Y."/>
            <person name="Park J.M."/>
            <person name="Song E.J."/>
            <person name="Mizuguchi G."/>
            <person name="Yoon J.H."/>
            <person name="Kim-Ha J."/>
            <person name="Lee K.-J."/>
            <person name="Kim Y.-J."/>
        </authorList>
    </citation>
    <scope>IDENTIFICATION BY MASS SPECTROMETRY</scope>
    <scope>IDENTIFICATION IN THE MEDIATOR COMPLEX</scope>
    <scope>FUNCTION OF THE MEDIATOR COMPLEX</scope>
    <scope>INTERACTION WITH MED6 AND MED17</scope>
</reference>
<keyword id="KW-0010">Activator</keyword>
<keyword id="KW-0539">Nucleus</keyword>
<keyword id="KW-1185">Reference proteome</keyword>
<keyword id="KW-0804">Transcription</keyword>
<keyword id="KW-0805">Transcription regulation</keyword>
<proteinExistence type="evidence at protein level"/>
<organism>
    <name type="scientific">Drosophila melanogaster</name>
    <name type="common">Fruit fly</name>
    <dbReference type="NCBI Taxonomy" id="7227"/>
    <lineage>
        <taxon>Eukaryota</taxon>
        <taxon>Metazoa</taxon>
        <taxon>Ecdysozoa</taxon>
        <taxon>Arthropoda</taxon>
        <taxon>Hexapoda</taxon>
        <taxon>Insecta</taxon>
        <taxon>Pterygota</taxon>
        <taxon>Neoptera</taxon>
        <taxon>Endopterygota</taxon>
        <taxon>Diptera</taxon>
        <taxon>Brachycera</taxon>
        <taxon>Muscomorpha</taxon>
        <taxon>Ephydroidea</taxon>
        <taxon>Drosophilidae</taxon>
        <taxon>Drosophila</taxon>
        <taxon>Sophophora</taxon>
    </lineage>
</organism>
<name>MED18_DROME</name>
<accession>Q9XZT1</accession>
<accession>C0PTW2</accession>
<accession>Q8MS08</accession>
<dbReference type="EMBL" id="AE014298">
    <property type="protein sequence ID" value="AAF45675.3"/>
    <property type="molecule type" value="Genomic_DNA"/>
</dbReference>
<dbReference type="EMBL" id="AL021106">
    <property type="protein sequence ID" value="CAB41707.1"/>
    <property type="molecule type" value="Genomic_DNA"/>
</dbReference>
<dbReference type="EMBL" id="AY119167">
    <property type="protein sequence ID" value="AAM51027.1"/>
    <property type="status" value="ALT_SEQ"/>
    <property type="molecule type" value="mRNA"/>
</dbReference>
<dbReference type="EMBL" id="BT071807">
    <property type="protein sequence ID" value="ACN52010.1"/>
    <property type="molecule type" value="mRNA"/>
</dbReference>
<dbReference type="PIR" id="T12679">
    <property type="entry name" value="T12679"/>
</dbReference>
<dbReference type="RefSeq" id="NP_569948.3">
    <property type="nucleotide sequence ID" value="NM_130592.4"/>
</dbReference>
<dbReference type="SMR" id="Q9XZT1"/>
<dbReference type="BioGRID" id="57686">
    <property type="interactions" value="43"/>
</dbReference>
<dbReference type="ComplexPortal" id="CPX-2308">
    <property type="entry name" value="Core mediator complex"/>
</dbReference>
<dbReference type="DIP" id="DIP-17703N"/>
<dbReference type="FunCoup" id="Q9XZT1">
    <property type="interactions" value="1233"/>
</dbReference>
<dbReference type="IntAct" id="Q9XZT1">
    <property type="interactions" value="62"/>
</dbReference>
<dbReference type="STRING" id="7227.FBpp0070295"/>
<dbReference type="PaxDb" id="7227-FBpp0070295"/>
<dbReference type="DNASU" id="31140"/>
<dbReference type="EnsemblMetazoa" id="FBtr0070308">
    <property type="protein sequence ID" value="FBpp0070295"/>
    <property type="gene ID" value="FBgn0026873"/>
</dbReference>
<dbReference type="GeneID" id="31140"/>
<dbReference type="KEGG" id="dme:Dmel_CG14802"/>
<dbReference type="AGR" id="FB:FBgn0026873"/>
<dbReference type="CTD" id="54797"/>
<dbReference type="FlyBase" id="FBgn0026873">
    <property type="gene designation" value="MED18"/>
</dbReference>
<dbReference type="VEuPathDB" id="VectorBase:FBgn0026873"/>
<dbReference type="eggNOG" id="KOG3264">
    <property type="taxonomic scope" value="Eukaryota"/>
</dbReference>
<dbReference type="GeneTree" id="ENSGT00390000003312"/>
<dbReference type="HOGENOM" id="CLU_084570_0_0_1"/>
<dbReference type="InParanoid" id="Q9XZT1"/>
<dbReference type="OMA" id="ARGYMFR"/>
<dbReference type="OrthoDB" id="10018982at2759"/>
<dbReference type="PhylomeDB" id="Q9XZT1"/>
<dbReference type="BioGRID-ORCS" id="31140">
    <property type="hits" value="1 hit in 1 CRISPR screen"/>
</dbReference>
<dbReference type="ChiTaRS" id="arm">
    <property type="organism name" value="fly"/>
</dbReference>
<dbReference type="GenomeRNAi" id="31140"/>
<dbReference type="PRO" id="PR:Q9XZT1"/>
<dbReference type="Proteomes" id="UP000000803">
    <property type="component" value="Chromosome X"/>
</dbReference>
<dbReference type="Bgee" id="FBgn0026873">
    <property type="expression patterns" value="Expressed in adult middle midgut class I enteroendocrine cell in adult midgut (Drosophila) and 93 other cell types or tissues"/>
</dbReference>
<dbReference type="ExpressionAtlas" id="Q9XZT1">
    <property type="expression patterns" value="baseline and differential"/>
</dbReference>
<dbReference type="GO" id="GO:0070847">
    <property type="term" value="C:core mediator complex"/>
    <property type="evidence" value="ECO:0000318"/>
    <property type="project" value="GO_Central"/>
</dbReference>
<dbReference type="GO" id="GO:0016592">
    <property type="term" value="C:mediator complex"/>
    <property type="evidence" value="ECO:0000314"/>
    <property type="project" value="UniProtKB"/>
</dbReference>
<dbReference type="GO" id="GO:0005634">
    <property type="term" value="C:nucleus"/>
    <property type="evidence" value="ECO:0000314"/>
    <property type="project" value="FlyBase"/>
</dbReference>
<dbReference type="GO" id="GO:0003712">
    <property type="term" value="F:transcription coregulator activity"/>
    <property type="evidence" value="ECO:0000315"/>
    <property type="project" value="UniProtKB"/>
</dbReference>
<dbReference type="GO" id="GO:0060261">
    <property type="term" value="P:positive regulation of transcription initiation by RNA polymerase II"/>
    <property type="evidence" value="ECO:0000318"/>
    <property type="project" value="GO_Central"/>
</dbReference>
<dbReference type="GO" id="GO:0006357">
    <property type="term" value="P:regulation of transcription by RNA polymerase II"/>
    <property type="evidence" value="ECO:0000315"/>
    <property type="project" value="UniProtKB"/>
</dbReference>
<dbReference type="FunFam" id="2.40.320.10:FF:000001">
    <property type="entry name" value="Mediator of RNA polymerase II transcription subunit 18"/>
    <property type="match status" value="1"/>
</dbReference>
<dbReference type="Gene3D" id="2.40.320.10">
    <property type="entry name" value="Hypothetical Protein Pfu-838710-001"/>
    <property type="match status" value="1"/>
</dbReference>
<dbReference type="InterPro" id="IPR019095">
    <property type="entry name" value="Mediator_Med18"/>
</dbReference>
<dbReference type="PANTHER" id="PTHR13321:SF2">
    <property type="entry name" value="MEDIATOR OF RNA POLYMERASE II TRANSCRIPTION SUBUNIT 18"/>
    <property type="match status" value="1"/>
</dbReference>
<dbReference type="PANTHER" id="PTHR13321">
    <property type="entry name" value="MEDIATOR OF RNA POLYMERASE II TRANSCRIPTION, SUBUNIT 18"/>
    <property type="match status" value="1"/>
</dbReference>
<dbReference type="Pfam" id="PF09637">
    <property type="entry name" value="Med18"/>
    <property type="match status" value="1"/>
</dbReference>
<feature type="chain" id="PRO_0000304749" description="Mediator of RNA polymerase II transcription subunit 18">
    <location>
        <begin position="1"/>
        <end position="217"/>
    </location>
</feature>
<sequence length="217" mass="24673">MAIVSSARESLSHAMNNRFLPNLEYLLQGSILDSAVEHLMHRLKGLCDNVDTSPEPFHDLEVCMSLRQPNANQPLLLRVRRALGRDAPFQMRYLGNPEVDLRRPTLVRSCMDCACTNGILEFLTEMGFRLEFEYIAKGYMFRKGRMKITVSKLIKIVPGKQQDMANEPISQSYIVELSVVAPTGQENVGEEMRVFAEQLKPLVQLEKIDYKRLGGMP</sequence>
<gene>
    <name type="primary">MED18</name>
    <name type="synonym">arm</name>
    <name type="ORF">CG14802</name>
</gene>
<comment type="function">
    <text evidence="1 2">Component of the Mediator complex, a coactivator involved in the regulated transcription of nearly all RNA polymerase II-dependent genes. Mediator functions as a bridge to convey information from gene-specific regulatory proteins to the basal RNA polymerase II transcription machinery. Mediator is recruited to promoters by direct interactions with regulatory proteins and serves as a scaffold for the assembly of a functional preinitiation complex with RNA polymerase II and the general transcription factors.</text>
</comment>
<comment type="subunit">
    <text evidence="1 2">Component of the Mediator complex, which includes at least CDK8, MED4, MED6, MED11, MED14, MED17, MED18, MED20, MED21, MED22, MED27, MED28, MED30 and MED31.</text>
</comment>
<comment type="interaction">
    <interactant intactId="EBI-148856">
        <id>Q9XZT1</id>
    </interactant>
    <interactant intactId="EBI-175591">
        <id>P91641</id>
        <label>MED20</label>
    </interactant>
    <organismsDiffer>false</organismsDiffer>
    <experiments>5</experiments>
</comment>
<comment type="subcellular location">
    <subcellularLocation>
        <location evidence="3">Nucleus</location>
    </subcellularLocation>
</comment>
<comment type="developmental stage">
    <text evidence="1">Expressed both maternally and zygotically. Expression decreases during larval stages then rises during mid-pupal metamorphosis.</text>
</comment>
<comment type="similarity">
    <text evidence="3">Belongs to the Mediator complex subunit 18 family.</text>
</comment>
<comment type="sequence caution" evidence="3">
    <conflict type="miscellaneous discrepancy">
        <sequence resource="EMBL-CDS" id="AAM51027"/>
    </conflict>
    <text>Intron retention.</text>
</comment>
<evidence type="ECO:0000269" key="1">
    <source>
    </source>
</evidence>
<evidence type="ECO:0000269" key="2">
    <source>
    </source>
</evidence>
<evidence type="ECO:0000305" key="3"/>
<protein>
    <recommendedName>
        <fullName>Mediator of RNA polymerase II transcription subunit 18</fullName>
    </recommendedName>
    <alternativeName>
        <fullName>Mediator complex subunit 18</fullName>
    </alternativeName>
    <alternativeName>
        <fullName>dp28b</fullName>
    </alternativeName>
</protein>